<sequence>MAGEMTILGSAVLTLLLAGYLAQQYLPLPTPKVIGIDLGTTYCSVGVFFPGTGKVKVIPDENGHISIPSMVSFTDDDVYVGYESLELADSNPQNTIYDAKRFIGKVFTPEELEAEIGRYPFKVLNKNGMVEFSVTSNETITVSPEYVGSRLLLKLKEMAEEYLGMPVANAVISVPAEFDLKQRNSTIQAANLAGLKILRVINEPTAAAMAYGLHKAEVFHVLVIDLGGGTLDVSLLNKQGGMFLTRAMSGNNKLGGQDFNQRLLQYLYKQIYQTYGFLPSRKEEIHRLRQAVEMVKLNLTLHETAQMSVLLTVEENDRKGPPTSDSELPKDKFSQANDPHVDSMFGANLSEKKNGEGQVLFETEISRKLFDTLNEDLFQKILVPIQQVLKEGHLEKTEIDEVVLVGGSTRIPRIRQVIQEFFGKDPNTSVDPDLAVVTGVAIQAGIDGGSWPLQVSALEIPNKHLQKTNFN</sequence>
<accession>Q2TBX4</accession>
<gene>
    <name type="primary">HSPA13</name>
    <name type="synonym">STCH</name>
</gene>
<evidence type="ECO:0000250" key="1"/>
<evidence type="ECO:0000255" key="2"/>
<evidence type="ECO:0000256" key="3">
    <source>
        <dbReference type="SAM" id="MobiDB-lite"/>
    </source>
</evidence>
<evidence type="ECO:0000305" key="4"/>
<dbReference type="EMBL" id="BC109505">
    <property type="protein sequence ID" value="AAI09506.1"/>
    <property type="molecule type" value="mRNA"/>
</dbReference>
<dbReference type="RefSeq" id="NP_001033594.1">
    <property type="nucleotide sequence ID" value="NM_001038505.2"/>
</dbReference>
<dbReference type="SMR" id="Q2TBX4"/>
<dbReference type="FunCoup" id="Q2TBX4">
    <property type="interactions" value="1509"/>
</dbReference>
<dbReference type="STRING" id="9913.ENSBTAP00000017155"/>
<dbReference type="PaxDb" id="9913-ENSBTAP00000017155"/>
<dbReference type="Ensembl" id="ENSBTAT00000017155.5">
    <property type="protein sequence ID" value="ENSBTAP00000017155.3"/>
    <property type="gene ID" value="ENSBTAG00000012908.5"/>
</dbReference>
<dbReference type="GeneID" id="505907"/>
<dbReference type="KEGG" id="bta:505907"/>
<dbReference type="CTD" id="6782"/>
<dbReference type="VEuPathDB" id="HostDB:ENSBTAG00000012908"/>
<dbReference type="VGNC" id="VGNC:53581">
    <property type="gene designation" value="HSPA13"/>
</dbReference>
<dbReference type="eggNOG" id="KOG0101">
    <property type="taxonomic scope" value="Eukaryota"/>
</dbReference>
<dbReference type="GeneTree" id="ENSGT00890000139503"/>
<dbReference type="HOGENOM" id="CLU_005965_0_3_1"/>
<dbReference type="InParanoid" id="Q2TBX4"/>
<dbReference type="OMA" id="GGMFITR"/>
<dbReference type="OrthoDB" id="2401965at2759"/>
<dbReference type="TreeFam" id="TF105047"/>
<dbReference type="Reactome" id="R-BTA-3371453">
    <property type="pathway name" value="Regulation of HSF1-mediated heat shock response"/>
</dbReference>
<dbReference type="PRO" id="PR:Q2TBX4"/>
<dbReference type="Proteomes" id="UP000009136">
    <property type="component" value="Chromosome 1"/>
</dbReference>
<dbReference type="Bgee" id="ENSBTAG00000012908">
    <property type="expression patterns" value="Expressed in spermatocyte and 111 other cell types or tissues"/>
</dbReference>
<dbReference type="GO" id="GO:0005737">
    <property type="term" value="C:cytoplasm"/>
    <property type="evidence" value="ECO:0000318"/>
    <property type="project" value="GO_Central"/>
</dbReference>
<dbReference type="GO" id="GO:0005829">
    <property type="term" value="C:cytosol"/>
    <property type="evidence" value="ECO:0000318"/>
    <property type="project" value="GO_Central"/>
</dbReference>
<dbReference type="GO" id="GO:0005783">
    <property type="term" value="C:endoplasmic reticulum"/>
    <property type="evidence" value="ECO:0007669"/>
    <property type="project" value="UniProtKB-SubCell"/>
</dbReference>
<dbReference type="GO" id="GO:0005634">
    <property type="term" value="C:nucleus"/>
    <property type="evidence" value="ECO:0000318"/>
    <property type="project" value="GO_Central"/>
</dbReference>
<dbReference type="GO" id="GO:0005886">
    <property type="term" value="C:plasma membrane"/>
    <property type="evidence" value="ECO:0000318"/>
    <property type="project" value="GO_Central"/>
</dbReference>
<dbReference type="GO" id="GO:0005524">
    <property type="term" value="F:ATP binding"/>
    <property type="evidence" value="ECO:0007669"/>
    <property type="project" value="UniProtKB-KW"/>
</dbReference>
<dbReference type="GO" id="GO:0016887">
    <property type="term" value="F:ATP hydrolysis activity"/>
    <property type="evidence" value="ECO:0000318"/>
    <property type="project" value="GO_Central"/>
</dbReference>
<dbReference type="GO" id="GO:0140662">
    <property type="term" value="F:ATP-dependent protein folding chaperone"/>
    <property type="evidence" value="ECO:0007669"/>
    <property type="project" value="InterPro"/>
</dbReference>
<dbReference type="GO" id="GO:0031072">
    <property type="term" value="F:heat shock protein binding"/>
    <property type="evidence" value="ECO:0000318"/>
    <property type="project" value="GO_Central"/>
</dbReference>
<dbReference type="GO" id="GO:0044183">
    <property type="term" value="F:protein folding chaperone"/>
    <property type="evidence" value="ECO:0000318"/>
    <property type="project" value="GO_Central"/>
</dbReference>
<dbReference type="GO" id="GO:0051085">
    <property type="term" value="P:chaperone cofactor-dependent protein refolding"/>
    <property type="evidence" value="ECO:0000318"/>
    <property type="project" value="GO_Central"/>
</dbReference>
<dbReference type="GO" id="GO:0042026">
    <property type="term" value="P:protein refolding"/>
    <property type="evidence" value="ECO:0000318"/>
    <property type="project" value="GO_Central"/>
</dbReference>
<dbReference type="CDD" id="cd10237">
    <property type="entry name" value="ASKHA_NBD_HSP70_HSPA13"/>
    <property type="match status" value="1"/>
</dbReference>
<dbReference type="FunFam" id="3.30.30.30:FF:000007">
    <property type="entry name" value="Heat shock 70 kDa protein 13"/>
    <property type="match status" value="1"/>
</dbReference>
<dbReference type="FunFam" id="3.30.420.40:FF:000099">
    <property type="entry name" value="Heat shock 70 kDa protein 13"/>
    <property type="match status" value="1"/>
</dbReference>
<dbReference type="FunFam" id="3.30.420.40:FF:000103">
    <property type="entry name" value="Heat shock 70 kDa protein 13"/>
    <property type="match status" value="1"/>
</dbReference>
<dbReference type="FunFam" id="3.90.640.10:FF:000022">
    <property type="entry name" value="heat shock 70 kDa protein 13"/>
    <property type="match status" value="1"/>
</dbReference>
<dbReference type="FunFam" id="3.90.640.10:FF:000032">
    <property type="entry name" value="heat shock 70 kDa protein 13"/>
    <property type="match status" value="1"/>
</dbReference>
<dbReference type="FunFam" id="3.30.420.40:FF:000110">
    <property type="entry name" value="heat shock 70 kDa protein 13 isoform X1"/>
    <property type="match status" value="1"/>
</dbReference>
<dbReference type="Gene3D" id="3.30.30.30">
    <property type="match status" value="1"/>
</dbReference>
<dbReference type="Gene3D" id="3.30.420.40">
    <property type="match status" value="2"/>
</dbReference>
<dbReference type="Gene3D" id="3.90.640.10">
    <property type="entry name" value="Actin, Chain A, domain 4"/>
    <property type="match status" value="1"/>
</dbReference>
<dbReference type="InterPro" id="IPR043129">
    <property type="entry name" value="ATPase_NBD"/>
</dbReference>
<dbReference type="InterPro" id="IPR018181">
    <property type="entry name" value="Heat_shock_70_CS"/>
</dbReference>
<dbReference type="InterPro" id="IPR013126">
    <property type="entry name" value="Hsp_70_fam"/>
</dbReference>
<dbReference type="InterPro" id="IPR042048">
    <property type="entry name" value="HSPA13"/>
</dbReference>
<dbReference type="PANTHER" id="PTHR19375">
    <property type="entry name" value="HEAT SHOCK PROTEIN 70KDA"/>
    <property type="match status" value="1"/>
</dbReference>
<dbReference type="Pfam" id="PF00012">
    <property type="entry name" value="HSP70"/>
    <property type="match status" value="2"/>
</dbReference>
<dbReference type="PRINTS" id="PR00301">
    <property type="entry name" value="HEATSHOCK70"/>
</dbReference>
<dbReference type="SUPFAM" id="SSF53067">
    <property type="entry name" value="Actin-like ATPase domain"/>
    <property type="match status" value="2"/>
</dbReference>
<dbReference type="PROSITE" id="PS00297">
    <property type="entry name" value="HSP70_1"/>
    <property type="match status" value="1"/>
</dbReference>
<dbReference type="PROSITE" id="PS00329">
    <property type="entry name" value="HSP70_2"/>
    <property type="match status" value="1"/>
</dbReference>
<dbReference type="PROSITE" id="PS01036">
    <property type="entry name" value="HSP70_3"/>
    <property type="match status" value="1"/>
</dbReference>
<name>HSP13_BOVIN</name>
<reference key="1">
    <citation type="submission" date="2005-11" db="EMBL/GenBank/DDBJ databases">
        <authorList>
            <consortium name="NIH - Mammalian Gene Collection (MGC) project"/>
        </authorList>
    </citation>
    <scope>NUCLEOTIDE SEQUENCE [LARGE SCALE MRNA]</scope>
    <source>
        <strain>Crossbred X Angus</strain>
        <tissue>Liver</tissue>
    </source>
</reference>
<feature type="signal peptide" evidence="2">
    <location>
        <begin position="1"/>
        <end position="22"/>
    </location>
</feature>
<feature type="chain" id="PRO_0000289949" description="Heat shock 70 kDa protein 13">
    <location>
        <begin position="23"/>
        <end position="471"/>
    </location>
</feature>
<feature type="region of interest" description="Disordered" evidence="3">
    <location>
        <begin position="315"/>
        <end position="337"/>
    </location>
</feature>
<protein>
    <recommendedName>
        <fullName>Heat shock 70 kDa protein 13</fullName>
    </recommendedName>
    <alternativeName>
        <fullName>Stress-70 protein chaperone microsome-associated 60 kDa protein</fullName>
    </alternativeName>
</protein>
<proteinExistence type="evidence at transcript level"/>
<organism>
    <name type="scientific">Bos taurus</name>
    <name type="common">Bovine</name>
    <dbReference type="NCBI Taxonomy" id="9913"/>
    <lineage>
        <taxon>Eukaryota</taxon>
        <taxon>Metazoa</taxon>
        <taxon>Chordata</taxon>
        <taxon>Craniata</taxon>
        <taxon>Vertebrata</taxon>
        <taxon>Euteleostomi</taxon>
        <taxon>Mammalia</taxon>
        <taxon>Eutheria</taxon>
        <taxon>Laurasiatheria</taxon>
        <taxon>Artiodactyla</taxon>
        <taxon>Ruminantia</taxon>
        <taxon>Pecora</taxon>
        <taxon>Bovidae</taxon>
        <taxon>Bovinae</taxon>
        <taxon>Bos</taxon>
    </lineage>
</organism>
<keyword id="KW-0067">ATP-binding</keyword>
<keyword id="KW-0256">Endoplasmic reticulum</keyword>
<keyword id="KW-0492">Microsome</keyword>
<keyword id="KW-0547">Nucleotide-binding</keyword>
<keyword id="KW-1185">Reference proteome</keyword>
<keyword id="KW-0732">Signal</keyword>
<comment type="function">
    <text evidence="1">Has peptide-independent ATPase activity.</text>
</comment>
<comment type="subunit">
    <text evidence="1">Binds UBQLN2.</text>
</comment>
<comment type="subcellular location">
    <subcellularLocation>
        <location evidence="1">Microsome</location>
    </subcellularLocation>
    <subcellularLocation>
        <location evidence="1">Endoplasmic reticulum</location>
    </subcellularLocation>
</comment>
<comment type="similarity">
    <text evidence="4">Belongs to the heat shock protein 70 family.</text>
</comment>